<organism>
    <name type="scientific">Schizosaccharomyces pombe (strain 972 / ATCC 24843)</name>
    <name type="common">Fission yeast</name>
    <dbReference type="NCBI Taxonomy" id="284812"/>
    <lineage>
        <taxon>Eukaryota</taxon>
        <taxon>Fungi</taxon>
        <taxon>Dikarya</taxon>
        <taxon>Ascomycota</taxon>
        <taxon>Taphrinomycotina</taxon>
        <taxon>Schizosaccharomycetes</taxon>
        <taxon>Schizosaccharomycetales</taxon>
        <taxon>Schizosaccharomycetaceae</taxon>
        <taxon>Schizosaccharomyces</taxon>
    </lineage>
</organism>
<proteinExistence type="inferred from homology"/>
<keyword id="KW-0539">Nucleus</keyword>
<keyword id="KW-1185">Reference proteome</keyword>
<keyword id="KW-0677">Repeat</keyword>
<keyword id="KW-0853">WD repeat</keyword>
<name>SWD1_SCHPO</name>
<accession>O42858</accession>
<sequence length="398" mass="45184">MNLELLDPFSIPDYPEALTTTLKHGHATSIRFSTNGYHLASGLVNGSVVIWDLSTFSVSRVLTGHTRAIQSVCWSSCDRFLLTASRDWKCILWDLRDGSIVYQVVLSAPVWSASLHPHKINTFVASLLDESPQLIIVDDGIPKHKYLPTNPDIDENYSDRRNRSKHVTLVSFFHPSGEYILSGTSKGWFHVIDASTTKIRSSHRITSQSIKQIRLSFCKRFLIFNSTDRVIRTVSIQDLDNPEVEHKFQDVVNRLQWNSCGFSQTGEFVFATTYQMAHAIYVWERGMGSLVKILEGPKEELVDVDWHPVFPCVASVGLDSGSIYIWAVEQKESWSAFAPDFQELEENIEYEEPEDEFDIHDETGKSEEEEYFTSVVKILPHDSSAEQPFVMPPTLSSS</sequence>
<reference key="1">
    <citation type="journal article" date="2002" name="Nature">
        <title>The genome sequence of Schizosaccharomyces pombe.</title>
        <authorList>
            <person name="Wood V."/>
            <person name="Gwilliam R."/>
            <person name="Rajandream M.A."/>
            <person name="Lyne M.H."/>
            <person name="Lyne R."/>
            <person name="Stewart A."/>
            <person name="Sgouros J.G."/>
            <person name="Peat N."/>
            <person name="Hayles J."/>
            <person name="Baker S.G."/>
            <person name="Basham D."/>
            <person name="Bowman S."/>
            <person name="Brooks K."/>
            <person name="Brown D."/>
            <person name="Brown S."/>
            <person name="Chillingworth T."/>
            <person name="Churcher C.M."/>
            <person name="Collins M."/>
            <person name="Connor R."/>
            <person name="Cronin A."/>
            <person name="Davis P."/>
            <person name="Feltwell T."/>
            <person name="Fraser A."/>
            <person name="Gentles S."/>
            <person name="Goble A."/>
            <person name="Hamlin N."/>
            <person name="Harris D.E."/>
            <person name="Hidalgo J."/>
            <person name="Hodgson G."/>
            <person name="Holroyd S."/>
            <person name="Hornsby T."/>
            <person name="Howarth S."/>
            <person name="Huckle E.J."/>
            <person name="Hunt S."/>
            <person name="Jagels K."/>
            <person name="James K.D."/>
            <person name="Jones L."/>
            <person name="Jones M."/>
            <person name="Leather S."/>
            <person name="McDonald S."/>
            <person name="McLean J."/>
            <person name="Mooney P."/>
            <person name="Moule S."/>
            <person name="Mungall K.L."/>
            <person name="Murphy L.D."/>
            <person name="Niblett D."/>
            <person name="Odell C."/>
            <person name="Oliver K."/>
            <person name="O'Neil S."/>
            <person name="Pearson D."/>
            <person name="Quail M.A."/>
            <person name="Rabbinowitsch E."/>
            <person name="Rutherford K.M."/>
            <person name="Rutter S."/>
            <person name="Saunders D."/>
            <person name="Seeger K."/>
            <person name="Sharp S."/>
            <person name="Skelton J."/>
            <person name="Simmonds M.N."/>
            <person name="Squares R."/>
            <person name="Squares S."/>
            <person name="Stevens K."/>
            <person name="Taylor K."/>
            <person name="Taylor R.G."/>
            <person name="Tivey A."/>
            <person name="Walsh S.V."/>
            <person name="Warren T."/>
            <person name="Whitehead S."/>
            <person name="Woodward J.R."/>
            <person name="Volckaert G."/>
            <person name="Aert R."/>
            <person name="Robben J."/>
            <person name="Grymonprez B."/>
            <person name="Weltjens I."/>
            <person name="Vanstreels E."/>
            <person name="Rieger M."/>
            <person name="Schaefer M."/>
            <person name="Mueller-Auer S."/>
            <person name="Gabel C."/>
            <person name="Fuchs M."/>
            <person name="Duesterhoeft A."/>
            <person name="Fritzc C."/>
            <person name="Holzer E."/>
            <person name="Moestl D."/>
            <person name="Hilbert H."/>
            <person name="Borzym K."/>
            <person name="Langer I."/>
            <person name="Beck A."/>
            <person name="Lehrach H."/>
            <person name="Reinhardt R."/>
            <person name="Pohl T.M."/>
            <person name="Eger P."/>
            <person name="Zimmermann W."/>
            <person name="Wedler H."/>
            <person name="Wambutt R."/>
            <person name="Purnelle B."/>
            <person name="Goffeau A."/>
            <person name="Cadieu E."/>
            <person name="Dreano S."/>
            <person name="Gloux S."/>
            <person name="Lelaure V."/>
            <person name="Mottier S."/>
            <person name="Galibert F."/>
            <person name="Aves S.J."/>
            <person name="Xiang Z."/>
            <person name="Hunt C."/>
            <person name="Moore K."/>
            <person name="Hurst S.M."/>
            <person name="Lucas M."/>
            <person name="Rochet M."/>
            <person name="Gaillardin C."/>
            <person name="Tallada V.A."/>
            <person name="Garzon A."/>
            <person name="Thode G."/>
            <person name="Daga R.R."/>
            <person name="Cruzado L."/>
            <person name="Jimenez J."/>
            <person name="Sanchez M."/>
            <person name="del Rey F."/>
            <person name="Benito J."/>
            <person name="Dominguez A."/>
            <person name="Revuelta J.L."/>
            <person name="Moreno S."/>
            <person name="Armstrong J."/>
            <person name="Forsburg S.L."/>
            <person name="Cerutti L."/>
            <person name="Lowe T."/>
            <person name="McCombie W.R."/>
            <person name="Paulsen I."/>
            <person name="Potashkin J."/>
            <person name="Shpakovski G.V."/>
            <person name="Ussery D."/>
            <person name="Barrell B.G."/>
            <person name="Nurse P."/>
        </authorList>
    </citation>
    <scope>NUCLEOTIDE SEQUENCE [LARGE SCALE GENOMIC DNA]</scope>
    <source>
        <strain>972 / ATCC 24843</strain>
    </source>
</reference>
<reference key="2">
    <citation type="journal article" date="2003" name="J. Biol. Chem.">
        <title>High conservation of the Set1/Rad6 axis of histone 3 lysine 4 methylation in budding and fission yeasts.</title>
        <authorList>
            <person name="Roguev A."/>
            <person name="Schaft D."/>
            <person name="Shevchenko A."/>
            <person name="Aasland R."/>
            <person name="Shevchenko A."/>
            <person name="Stewart A.F."/>
        </authorList>
    </citation>
    <scope>FUNCTION</scope>
    <scope>COMPOSITION OF THE SET1 COMPLEX</scope>
</reference>
<reference key="3">
    <citation type="journal article" date="2004" name="Mol. Cell. Proteomics">
        <title>A comparative analysis of an orthologous proteomic environment in the yeasts Saccharomyces cerevisiae and Schizosaccharomyces pombe.</title>
        <authorList>
            <person name="Roguev A."/>
            <person name="Shevchenko A."/>
            <person name="Schaft D."/>
            <person name="Thomas H."/>
            <person name="Stewart A.F."/>
            <person name="Shevchenko A."/>
        </authorList>
    </citation>
    <scope>COMPOSITION OF THE SET1 COMPLEX</scope>
</reference>
<feature type="chain" id="PRO_0000051250" description="Set1 complex component swd1">
    <location>
        <begin position="1"/>
        <end position="398"/>
    </location>
</feature>
<feature type="repeat" description="WD 1">
    <location>
        <begin position="22"/>
        <end position="61"/>
    </location>
</feature>
<feature type="repeat" description="WD 2">
    <location>
        <begin position="64"/>
        <end position="103"/>
    </location>
</feature>
<feature type="repeat" description="WD 3">
    <location>
        <begin position="162"/>
        <end position="202"/>
    </location>
</feature>
<feature type="repeat" description="WD 4">
    <location>
        <begin position="247"/>
        <end position="295"/>
    </location>
</feature>
<feature type="repeat" description="WD 5">
    <location>
        <begin position="296"/>
        <end position="336"/>
    </location>
</feature>
<comment type="function">
    <text evidence="2">The Set1 complex specifically methylates 'Lys-4' of histone H3.</text>
</comment>
<comment type="subunit">
    <text>Component of the Set1 complex composed of ash2, sdc1, set1, shg1, spp1, swd1, swd2 and swd3.</text>
</comment>
<comment type="subcellular location">
    <subcellularLocation>
        <location evidence="1">Nucleus</location>
    </subcellularLocation>
</comment>
<protein>
    <recommendedName>
        <fullName>Set1 complex component swd1</fullName>
        <shortName>Set1C component swd1</shortName>
    </recommendedName>
    <alternativeName>
        <fullName>COMPASS component swd1</fullName>
    </alternativeName>
    <alternativeName>
        <fullName>Complex proteins associated with set1 protein swd1</fullName>
    </alternativeName>
</protein>
<dbReference type="EMBL" id="CU329670">
    <property type="protein sequence ID" value="CAB16241.2"/>
    <property type="molecule type" value="Genomic_DNA"/>
</dbReference>
<dbReference type="PIR" id="T38298">
    <property type="entry name" value="T38298"/>
</dbReference>
<dbReference type="RefSeq" id="NP_593795.1">
    <property type="nucleotide sequence ID" value="NM_001019224.2"/>
</dbReference>
<dbReference type="SMR" id="O42858"/>
<dbReference type="BioGRID" id="278270">
    <property type="interactions" value="282"/>
</dbReference>
<dbReference type="ComplexPortal" id="CPX-10325">
    <property type="entry name" value="COMPASS complex"/>
</dbReference>
<dbReference type="ELM" id="O42858"/>
<dbReference type="FunCoup" id="O42858">
    <property type="interactions" value="1002"/>
</dbReference>
<dbReference type="STRING" id="284812.O42858"/>
<dbReference type="iPTMnet" id="O42858"/>
<dbReference type="SwissPalm" id="O42858"/>
<dbReference type="PaxDb" id="4896-SPAC23H3.05c.1"/>
<dbReference type="EnsemblFungi" id="SPAC23H3.05c.1">
    <property type="protein sequence ID" value="SPAC23H3.05c.1:pep"/>
    <property type="gene ID" value="SPAC23H3.05c"/>
</dbReference>
<dbReference type="GeneID" id="2541776"/>
<dbReference type="KEGG" id="spo:2541776"/>
<dbReference type="PomBase" id="SPAC23H3.05c">
    <property type="gene designation" value="swd1"/>
</dbReference>
<dbReference type="VEuPathDB" id="FungiDB:SPAC23H3.05c"/>
<dbReference type="eggNOG" id="KOG1273">
    <property type="taxonomic scope" value="Eukaryota"/>
</dbReference>
<dbReference type="HOGENOM" id="CLU_032142_0_0_1"/>
<dbReference type="InParanoid" id="O42858"/>
<dbReference type="OMA" id="DYEDDIM"/>
<dbReference type="PhylomeDB" id="O42858"/>
<dbReference type="Reactome" id="R-SPO-3214841">
    <property type="pathway name" value="PKMTs methylate histone lysines"/>
</dbReference>
<dbReference type="Reactome" id="R-SPO-8951664">
    <property type="pathway name" value="Neddylation"/>
</dbReference>
<dbReference type="Reactome" id="R-SPO-9772755">
    <property type="pathway name" value="Formation of WDR5-containing histone-modifying complexes"/>
</dbReference>
<dbReference type="PRO" id="PR:O42858"/>
<dbReference type="Proteomes" id="UP000002485">
    <property type="component" value="Chromosome I"/>
</dbReference>
<dbReference type="GO" id="GO:0000785">
    <property type="term" value="C:chromatin"/>
    <property type="evidence" value="ECO:0000305"/>
    <property type="project" value="PomBase"/>
</dbReference>
<dbReference type="GO" id="GO:0005829">
    <property type="term" value="C:cytosol"/>
    <property type="evidence" value="ECO:0007005"/>
    <property type="project" value="PomBase"/>
</dbReference>
<dbReference type="GO" id="GO:0005634">
    <property type="term" value="C:nucleus"/>
    <property type="evidence" value="ECO:0007005"/>
    <property type="project" value="PomBase"/>
</dbReference>
<dbReference type="GO" id="GO:0048188">
    <property type="term" value="C:Set1C/COMPASS complex"/>
    <property type="evidence" value="ECO:0000314"/>
    <property type="project" value="PomBase"/>
</dbReference>
<dbReference type="GO" id="GO:0045815">
    <property type="term" value="P:transcription initiation-coupled chromatin remodeling"/>
    <property type="evidence" value="ECO:0000305"/>
    <property type="project" value="PomBase"/>
</dbReference>
<dbReference type="Gene3D" id="2.130.10.10">
    <property type="entry name" value="YVTN repeat-like/Quinoprotein amine dehydrogenase"/>
    <property type="match status" value="2"/>
</dbReference>
<dbReference type="InterPro" id="IPR037850">
    <property type="entry name" value="RBBP5/Swd1"/>
</dbReference>
<dbReference type="InterPro" id="IPR015943">
    <property type="entry name" value="WD40/YVTN_repeat-like_dom_sf"/>
</dbReference>
<dbReference type="InterPro" id="IPR019775">
    <property type="entry name" value="WD40_repeat_CS"/>
</dbReference>
<dbReference type="InterPro" id="IPR036322">
    <property type="entry name" value="WD40_repeat_dom_sf"/>
</dbReference>
<dbReference type="InterPro" id="IPR001680">
    <property type="entry name" value="WD40_rpt"/>
</dbReference>
<dbReference type="PANTHER" id="PTHR44040">
    <property type="entry name" value="RETINOBLASTOMA-BINDING PROTEIN 5"/>
    <property type="match status" value="1"/>
</dbReference>
<dbReference type="PANTHER" id="PTHR44040:SF1">
    <property type="entry name" value="RETINOBLASTOMA-BINDING PROTEIN 5"/>
    <property type="match status" value="1"/>
</dbReference>
<dbReference type="Pfam" id="PF00400">
    <property type="entry name" value="WD40"/>
    <property type="match status" value="2"/>
</dbReference>
<dbReference type="SMART" id="SM00320">
    <property type="entry name" value="WD40"/>
    <property type="match status" value="5"/>
</dbReference>
<dbReference type="SUPFAM" id="SSF50978">
    <property type="entry name" value="WD40 repeat-like"/>
    <property type="match status" value="1"/>
</dbReference>
<dbReference type="PROSITE" id="PS00678">
    <property type="entry name" value="WD_REPEATS_1"/>
    <property type="match status" value="2"/>
</dbReference>
<dbReference type="PROSITE" id="PS50082">
    <property type="entry name" value="WD_REPEATS_2"/>
    <property type="match status" value="2"/>
</dbReference>
<dbReference type="PROSITE" id="PS50294">
    <property type="entry name" value="WD_REPEATS_REGION"/>
    <property type="match status" value="1"/>
</dbReference>
<evidence type="ECO:0000250" key="1"/>
<evidence type="ECO:0000269" key="2">
    <source>
    </source>
</evidence>
<gene>
    <name type="primary">swd1</name>
    <name type="ORF">SPAC23H3.05c</name>
</gene>